<name>PSBN_BOWSE</name>
<sequence length="43" mass="4804">METAALVAISISRLLVSFTGYALYTAFGQPSEQLRDPFEEHED</sequence>
<reference key="1">
    <citation type="journal article" date="2003" name="Mol. Phylogenet. Evol.">
        <title>Inference of higher-order relationships in the cycads from a large chloroplast data set.</title>
        <authorList>
            <person name="Rai H.S."/>
            <person name="O'Brien H.E."/>
            <person name="Reeves P.A."/>
            <person name="Olmstead R.G."/>
            <person name="Graham S.W."/>
        </authorList>
    </citation>
    <scope>NUCLEOTIDE SEQUENCE [GENOMIC DNA]</scope>
</reference>
<geneLocation type="chloroplast"/>
<keyword id="KW-0150">Chloroplast</keyword>
<keyword id="KW-0472">Membrane</keyword>
<keyword id="KW-0934">Plastid</keyword>
<keyword id="KW-0793">Thylakoid</keyword>
<keyword id="KW-0812">Transmembrane</keyword>
<keyword id="KW-1133">Transmembrane helix</keyword>
<feature type="chain" id="PRO_0000207874" description="Protein PsbN">
    <location>
        <begin position="1"/>
        <end position="43"/>
    </location>
</feature>
<feature type="transmembrane region" description="Helical" evidence="1">
    <location>
        <begin position="5"/>
        <end position="27"/>
    </location>
</feature>
<comment type="function">
    <text evidence="1">May play a role in photosystem I and II biogenesis.</text>
</comment>
<comment type="subcellular location">
    <subcellularLocation>
        <location evidence="1">Plastid</location>
        <location evidence="1">Chloroplast thylakoid membrane</location>
        <topology evidence="1">Single-pass membrane protein</topology>
    </subcellularLocation>
</comment>
<comment type="similarity">
    <text evidence="1">Belongs to the PsbN family.</text>
</comment>
<comment type="caution">
    <text evidence="1">Originally thought to be a component of PSII; based on experiments in Synechocystis, N.tabacum and barley, and its absence from PSII in T.elongatus and T.vulcanus, this is probably not true.</text>
</comment>
<gene>
    <name evidence="1" type="primary">psbN</name>
</gene>
<organism>
    <name type="scientific">Bowenia serrulata</name>
    <name type="common">Byfield fern</name>
    <name type="synonym">Bowenia spectabilis var. serrulata</name>
    <dbReference type="NCBI Taxonomy" id="13365"/>
    <lineage>
        <taxon>Eukaryota</taxon>
        <taxon>Viridiplantae</taxon>
        <taxon>Streptophyta</taxon>
        <taxon>Embryophyta</taxon>
        <taxon>Tracheophyta</taxon>
        <taxon>Spermatophyta</taxon>
        <taxon>Cycadidae</taxon>
        <taxon>Cycadales</taxon>
        <taxon>Cycadaceae</taxon>
        <taxon>Bowenia</taxon>
    </lineage>
</organism>
<evidence type="ECO:0000255" key="1">
    <source>
        <dbReference type="HAMAP-Rule" id="MF_00293"/>
    </source>
</evidence>
<protein>
    <recommendedName>
        <fullName evidence="1">Protein PsbN</fullName>
    </recommendedName>
</protein>
<dbReference type="EMBL" id="AF469703">
    <property type="protein sequence ID" value="AAQ18520.1"/>
    <property type="molecule type" value="Genomic_DNA"/>
</dbReference>
<dbReference type="RefSeq" id="YP_009113542.1">
    <property type="nucleotide sequence ID" value="NC_026036.1"/>
</dbReference>
<dbReference type="SMR" id="Q71LB9"/>
<dbReference type="GeneID" id="22831925"/>
<dbReference type="GO" id="GO:0009535">
    <property type="term" value="C:chloroplast thylakoid membrane"/>
    <property type="evidence" value="ECO:0007669"/>
    <property type="project" value="UniProtKB-SubCell"/>
</dbReference>
<dbReference type="GO" id="GO:0015979">
    <property type="term" value="P:photosynthesis"/>
    <property type="evidence" value="ECO:0007669"/>
    <property type="project" value="InterPro"/>
</dbReference>
<dbReference type="HAMAP" id="MF_00293">
    <property type="entry name" value="PSII_PsbN"/>
    <property type="match status" value="1"/>
</dbReference>
<dbReference type="InterPro" id="IPR003398">
    <property type="entry name" value="PSII_PsbN"/>
</dbReference>
<dbReference type="PANTHER" id="PTHR35326">
    <property type="entry name" value="PROTEIN PSBN"/>
    <property type="match status" value="1"/>
</dbReference>
<dbReference type="PANTHER" id="PTHR35326:SF3">
    <property type="entry name" value="PROTEIN PSBN"/>
    <property type="match status" value="1"/>
</dbReference>
<dbReference type="Pfam" id="PF02468">
    <property type="entry name" value="PsbN"/>
    <property type="match status" value="1"/>
</dbReference>
<proteinExistence type="inferred from homology"/>
<accession>Q71LB9</accession>